<protein>
    <recommendedName>
        <fullName evidence="1">Large ribosomal subunit protein bL21</fullName>
    </recommendedName>
    <alternativeName>
        <fullName evidence="2">50S ribosomal protein L21</fullName>
    </alternativeName>
</protein>
<comment type="function">
    <text evidence="1">This protein binds to 23S rRNA in the presence of protein L20.</text>
</comment>
<comment type="subunit">
    <text evidence="1">Part of the 50S ribosomal subunit. Contacts protein L20.</text>
</comment>
<comment type="similarity">
    <text evidence="1">Belongs to the bacterial ribosomal protein bL21 family.</text>
</comment>
<accession>Q0TNI2</accession>
<name>RL21_CLOP1</name>
<organism>
    <name type="scientific">Clostridium perfringens (strain ATCC 13124 / DSM 756 / JCM 1290 / NCIMB 6125 / NCTC 8237 / Type A)</name>
    <dbReference type="NCBI Taxonomy" id="195103"/>
    <lineage>
        <taxon>Bacteria</taxon>
        <taxon>Bacillati</taxon>
        <taxon>Bacillota</taxon>
        <taxon>Clostridia</taxon>
        <taxon>Eubacteriales</taxon>
        <taxon>Clostridiaceae</taxon>
        <taxon>Clostridium</taxon>
    </lineage>
</organism>
<dbReference type="EMBL" id="CP000246">
    <property type="protein sequence ID" value="ABG82868.1"/>
    <property type="molecule type" value="Genomic_DNA"/>
</dbReference>
<dbReference type="RefSeq" id="WP_003452389.1">
    <property type="nucleotide sequence ID" value="NC_008261.1"/>
</dbReference>
<dbReference type="SMR" id="Q0TNI2"/>
<dbReference type="STRING" id="195103.CPF_2385"/>
<dbReference type="PaxDb" id="195103-CPF_2385"/>
<dbReference type="GeneID" id="93001336"/>
<dbReference type="KEGG" id="cpf:CPF_2385"/>
<dbReference type="eggNOG" id="COG0261">
    <property type="taxonomic scope" value="Bacteria"/>
</dbReference>
<dbReference type="HOGENOM" id="CLU_061463_3_2_9"/>
<dbReference type="Proteomes" id="UP000001823">
    <property type="component" value="Chromosome"/>
</dbReference>
<dbReference type="GO" id="GO:0005737">
    <property type="term" value="C:cytoplasm"/>
    <property type="evidence" value="ECO:0007669"/>
    <property type="project" value="UniProtKB-ARBA"/>
</dbReference>
<dbReference type="GO" id="GO:1990904">
    <property type="term" value="C:ribonucleoprotein complex"/>
    <property type="evidence" value="ECO:0007669"/>
    <property type="project" value="UniProtKB-KW"/>
</dbReference>
<dbReference type="GO" id="GO:0005840">
    <property type="term" value="C:ribosome"/>
    <property type="evidence" value="ECO:0007669"/>
    <property type="project" value="UniProtKB-KW"/>
</dbReference>
<dbReference type="GO" id="GO:0019843">
    <property type="term" value="F:rRNA binding"/>
    <property type="evidence" value="ECO:0007669"/>
    <property type="project" value="UniProtKB-UniRule"/>
</dbReference>
<dbReference type="GO" id="GO:0003735">
    <property type="term" value="F:structural constituent of ribosome"/>
    <property type="evidence" value="ECO:0007669"/>
    <property type="project" value="InterPro"/>
</dbReference>
<dbReference type="GO" id="GO:0006412">
    <property type="term" value="P:translation"/>
    <property type="evidence" value="ECO:0007669"/>
    <property type="project" value="UniProtKB-UniRule"/>
</dbReference>
<dbReference type="HAMAP" id="MF_01363">
    <property type="entry name" value="Ribosomal_bL21"/>
    <property type="match status" value="1"/>
</dbReference>
<dbReference type="InterPro" id="IPR028909">
    <property type="entry name" value="bL21-like"/>
</dbReference>
<dbReference type="InterPro" id="IPR036164">
    <property type="entry name" value="bL21-like_sf"/>
</dbReference>
<dbReference type="InterPro" id="IPR001787">
    <property type="entry name" value="Ribosomal_bL21"/>
</dbReference>
<dbReference type="InterPro" id="IPR018258">
    <property type="entry name" value="Ribosomal_bL21_CS"/>
</dbReference>
<dbReference type="NCBIfam" id="TIGR00061">
    <property type="entry name" value="L21"/>
    <property type="match status" value="1"/>
</dbReference>
<dbReference type="PANTHER" id="PTHR21349">
    <property type="entry name" value="50S RIBOSOMAL PROTEIN L21"/>
    <property type="match status" value="1"/>
</dbReference>
<dbReference type="PANTHER" id="PTHR21349:SF0">
    <property type="entry name" value="LARGE RIBOSOMAL SUBUNIT PROTEIN BL21M"/>
    <property type="match status" value="1"/>
</dbReference>
<dbReference type="Pfam" id="PF00829">
    <property type="entry name" value="Ribosomal_L21p"/>
    <property type="match status" value="1"/>
</dbReference>
<dbReference type="SUPFAM" id="SSF141091">
    <property type="entry name" value="L21p-like"/>
    <property type="match status" value="1"/>
</dbReference>
<dbReference type="PROSITE" id="PS01169">
    <property type="entry name" value="RIBOSOMAL_L21"/>
    <property type="match status" value="1"/>
</dbReference>
<sequence>MYAVLTTGGKQYRVQEGDVLFVEKLNAEVDSTVELTEVLAVAKDGEIKVGAPVVEGAKVVAKVLAQGKAKKVVVFKYKRKKDYRRKNGHRQPYTKIVIEKIEA</sequence>
<evidence type="ECO:0000255" key="1">
    <source>
        <dbReference type="HAMAP-Rule" id="MF_01363"/>
    </source>
</evidence>
<evidence type="ECO:0000305" key="2"/>
<gene>
    <name evidence="1" type="primary">rplU</name>
    <name type="ordered locus">CPF_2385</name>
</gene>
<reference key="1">
    <citation type="journal article" date="2006" name="Genome Res.">
        <title>Skewed genomic variability in strains of the toxigenic bacterial pathogen, Clostridium perfringens.</title>
        <authorList>
            <person name="Myers G.S.A."/>
            <person name="Rasko D.A."/>
            <person name="Cheung J.K."/>
            <person name="Ravel J."/>
            <person name="Seshadri R."/>
            <person name="DeBoy R.T."/>
            <person name="Ren Q."/>
            <person name="Varga J."/>
            <person name="Awad M.M."/>
            <person name="Brinkac L.M."/>
            <person name="Daugherty S.C."/>
            <person name="Haft D.H."/>
            <person name="Dodson R.J."/>
            <person name="Madupu R."/>
            <person name="Nelson W.C."/>
            <person name="Rosovitz M.J."/>
            <person name="Sullivan S.A."/>
            <person name="Khouri H."/>
            <person name="Dimitrov G.I."/>
            <person name="Watkins K.L."/>
            <person name="Mulligan S."/>
            <person name="Benton J."/>
            <person name="Radune D."/>
            <person name="Fisher D.J."/>
            <person name="Atkins H.S."/>
            <person name="Hiscox T."/>
            <person name="Jost B.H."/>
            <person name="Billington S.J."/>
            <person name="Songer J.G."/>
            <person name="McClane B.A."/>
            <person name="Titball R.W."/>
            <person name="Rood J.I."/>
            <person name="Melville S.B."/>
            <person name="Paulsen I.T."/>
        </authorList>
    </citation>
    <scope>NUCLEOTIDE SEQUENCE [LARGE SCALE GENOMIC DNA]</scope>
    <source>
        <strain>ATCC 13124 / DSM 756 / JCM 1290 / NCIMB 6125 / NCTC 8237 / S 107 / Type A</strain>
    </source>
</reference>
<proteinExistence type="inferred from homology"/>
<feature type="chain" id="PRO_0000269305" description="Large ribosomal subunit protein bL21">
    <location>
        <begin position="1"/>
        <end position="103"/>
    </location>
</feature>
<keyword id="KW-0687">Ribonucleoprotein</keyword>
<keyword id="KW-0689">Ribosomal protein</keyword>
<keyword id="KW-0694">RNA-binding</keyword>
<keyword id="KW-0699">rRNA-binding</keyword>